<sequence>MVEPLLCGIVLGLVPVTIAGLFVTAYLQYLRGDLATY</sequence>
<gene>
    <name evidence="1" type="primary">petG</name>
</gene>
<evidence type="ECO:0000255" key="1">
    <source>
        <dbReference type="HAMAP-Rule" id="MF_00432"/>
    </source>
</evidence>
<evidence type="ECO:0000305" key="2"/>
<evidence type="ECO:0007829" key="3">
    <source>
        <dbReference type="PDB" id="1Q90"/>
    </source>
</evidence>
<proteinExistence type="evidence at protein level"/>
<protein>
    <recommendedName>
        <fullName evidence="1">Cytochrome b6-f complex subunit 5</fullName>
    </recommendedName>
    <alternativeName>
        <fullName evidence="1">Cytochrome b6-f complex subunit PetG</fullName>
    </alternativeName>
    <alternativeName>
        <fullName evidence="1">Cytochrome b6-f complex subunit V</fullName>
    </alternativeName>
</protein>
<dbReference type="EMBL" id="X66250">
    <property type="protein sequence ID" value="CAA46979.1"/>
    <property type="molecule type" value="Genomic_DNA"/>
</dbReference>
<dbReference type="EMBL" id="FJ423446">
    <property type="protein sequence ID" value="ACJ50132.1"/>
    <property type="molecule type" value="Genomic_DNA"/>
</dbReference>
<dbReference type="EMBL" id="BK000554">
    <property type="protein sequence ID" value="DAA00946.1"/>
    <property type="molecule type" value="Genomic_DNA"/>
</dbReference>
<dbReference type="PIR" id="S26880">
    <property type="entry name" value="S26880"/>
</dbReference>
<dbReference type="RefSeq" id="NP_958401.1">
    <property type="nucleotide sequence ID" value="NC_005353.1"/>
</dbReference>
<dbReference type="PDB" id="1Q90">
    <property type="method" value="X-ray"/>
    <property type="resolution" value="3.10 A"/>
    <property type="chains" value="G=1-37"/>
</dbReference>
<dbReference type="PDBsum" id="1Q90"/>
<dbReference type="SMR" id="Q08362"/>
<dbReference type="FunCoup" id="Q08362">
    <property type="interactions" value="27"/>
</dbReference>
<dbReference type="IntAct" id="Q08362">
    <property type="interactions" value="1"/>
</dbReference>
<dbReference type="STRING" id="3055.Q08362"/>
<dbReference type="PaxDb" id="3055-DAA00946"/>
<dbReference type="GeneID" id="2716996"/>
<dbReference type="KEGG" id="cre:ChreCp045"/>
<dbReference type="eggNOG" id="ENOG502SD3G">
    <property type="taxonomic scope" value="Eukaryota"/>
</dbReference>
<dbReference type="HOGENOM" id="CLU_216962_0_0_1"/>
<dbReference type="InParanoid" id="Q08362"/>
<dbReference type="BioCyc" id="CHLAMY:CHRECP045-MONOMER"/>
<dbReference type="BioCyc" id="MetaCyc:CHRECP045-MONOMER"/>
<dbReference type="EvolutionaryTrace" id="Q08362"/>
<dbReference type="Proteomes" id="UP000006906">
    <property type="component" value="Chloroplast"/>
</dbReference>
<dbReference type="GO" id="GO:0009535">
    <property type="term" value="C:chloroplast thylakoid membrane"/>
    <property type="evidence" value="ECO:0007669"/>
    <property type="project" value="UniProtKB-SubCell"/>
</dbReference>
<dbReference type="GO" id="GO:0009512">
    <property type="term" value="C:cytochrome b6f complex"/>
    <property type="evidence" value="ECO:0007669"/>
    <property type="project" value="InterPro"/>
</dbReference>
<dbReference type="GO" id="GO:0045158">
    <property type="term" value="F:electron transporter, transferring electrons within cytochrome b6/f complex of photosystem II activity"/>
    <property type="evidence" value="ECO:0007669"/>
    <property type="project" value="UniProtKB-UniRule"/>
</dbReference>
<dbReference type="GO" id="GO:0017004">
    <property type="term" value="P:cytochrome complex assembly"/>
    <property type="evidence" value="ECO:0007669"/>
    <property type="project" value="UniProtKB-UniRule"/>
</dbReference>
<dbReference type="GO" id="GO:0015979">
    <property type="term" value="P:photosynthesis"/>
    <property type="evidence" value="ECO:0007669"/>
    <property type="project" value="UniProtKB-KW"/>
</dbReference>
<dbReference type="HAMAP" id="MF_00432">
    <property type="entry name" value="Cytb6_f_PetG"/>
    <property type="match status" value="1"/>
</dbReference>
<dbReference type="InterPro" id="IPR003683">
    <property type="entry name" value="Cyt_6/f_cplx_su5"/>
</dbReference>
<dbReference type="InterPro" id="IPR036099">
    <property type="entry name" value="Cyt_6/f_cplx_su5_sf"/>
</dbReference>
<dbReference type="NCBIfam" id="NF001907">
    <property type="entry name" value="PRK00665.1"/>
    <property type="match status" value="1"/>
</dbReference>
<dbReference type="Pfam" id="PF02529">
    <property type="entry name" value="PetG"/>
    <property type="match status" value="1"/>
</dbReference>
<dbReference type="PIRSF" id="PIRSF000034">
    <property type="entry name" value="Cyt_b6-f_V"/>
    <property type="match status" value="1"/>
</dbReference>
<dbReference type="SUPFAM" id="SSF103446">
    <property type="entry name" value="PetG subunit of the cytochrome b6f complex"/>
    <property type="match status" value="1"/>
</dbReference>
<keyword id="KW-0002">3D-structure</keyword>
<keyword id="KW-0150">Chloroplast</keyword>
<keyword id="KW-0903">Direct protein sequencing</keyword>
<keyword id="KW-0249">Electron transport</keyword>
<keyword id="KW-0472">Membrane</keyword>
<keyword id="KW-0602">Photosynthesis</keyword>
<keyword id="KW-0934">Plastid</keyword>
<keyword id="KW-1185">Reference proteome</keyword>
<keyword id="KW-0793">Thylakoid</keyword>
<keyword id="KW-0812">Transmembrane</keyword>
<keyword id="KW-1133">Transmembrane helix</keyword>
<keyword id="KW-0813">Transport</keyword>
<feature type="chain" id="PRO_0000216376" description="Cytochrome b6-f complex subunit 5">
    <location>
        <begin position="1"/>
        <end position="37"/>
    </location>
</feature>
<feature type="transmembrane region" description="Helical" evidence="1">
    <location>
        <begin position="5"/>
        <end position="25"/>
    </location>
</feature>
<feature type="sequence variant" description="In strain: CC-503.">
    <original>L</original>
    <variation>R</variation>
    <location>
        <position position="30"/>
    </location>
</feature>
<feature type="sequence conflict" description="In Ref. 4; AA sequence." evidence="2" ref="4">
    <original>C</original>
    <variation>L</variation>
    <location>
        <position position="7"/>
    </location>
</feature>
<feature type="helix" evidence="3">
    <location>
        <begin position="4"/>
        <end position="29"/>
    </location>
</feature>
<comment type="function">
    <text evidence="1">Component of the cytochrome b6-f complex, which mediates electron transfer between photosystem II (PSII) and photosystem I (PSI), cyclic electron flow around PSI, and state transitions. PetG is required for either the stability or assembly of the cytochrome b6-f complex.</text>
</comment>
<comment type="subunit">
    <text>The 4 large subunits of the cytochrome b6-f complex are cytochrome b6, subunit IV (17 kDa polypeptide, PetD), cytochrome f and the Rieske protein, while the 4 small subunits are PetG, PetL, PetM and PetN. The complex functions as a dimer.</text>
</comment>
<comment type="subcellular location">
    <subcellularLocation>
        <location>Plastid</location>
        <location>Chloroplast thylakoid membrane</location>
        <topology>Single-pass membrane protein</topology>
    </subcellularLocation>
</comment>
<comment type="similarity">
    <text evidence="1">Belongs to the PetG family.</text>
</comment>
<reference key="1">
    <citation type="journal article" date="1992" name="Curr. Genet.">
        <title>Organization and structure of plastome psbF, psbL, petG and ORF712 genes in Chlamydomonas reinhardtii.</title>
        <authorList>
            <person name="Fong S.E."/>
            <person name="Surzycki S.J."/>
        </authorList>
    </citation>
    <scope>NUCLEOTIDE SEQUENCE [GENOMIC DNA]</scope>
</reference>
<reference key="2">
    <citation type="journal article" date="1995" name="J. Biol. Chem.">
        <title>The deletion of petG in Chlamydomonas reinhardtii disrupts the cytochrome bf complex.</title>
        <authorList>
            <person name="Berthold D.A."/>
            <person name="Schmidt C.L."/>
            <person name="Malkin R."/>
        </authorList>
    </citation>
    <scope>NUCLEOTIDE SEQUENCE [GENOMIC DNA]</scope>
    <scope>CHARACTERIZATION</scope>
    <source>
        <strain>137c / CC-125</strain>
    </source>
</reference>
<reference key="3">
    <citation type="journal article" date="2009" name="BMC Evol. Biol.">
        <title>Nucleotide diversity of the Chlamydomonas reinhardtii plastid genome: addressing the mutational-hazard hypothesis.</title>
        <authorList>
            <person name="Smith D.R."/>
            <person name="Lee R.W."/>
        </authorList>
    </citation>
    <scope>NUCLEOTIDE SEQUENCE [LARGE SCALE GENOMIC DNA]</scope>
    <source>
        <strain>CC-503</strain>
    </source>
</reference>
<reference key="4">
    <citation type="journal article" date="1993" name="Photosyn. Res.">
        <title>Low molecular weight subunits associated with the cytochrome b6f complexes from spinach and Chlamydomonas reinhardtii.</title>
        <authorList>
            <person name="Schmidt C.L."/>
            <person name="Malkin R."/>
        </authorList>
    </citation>
    <scope>PROTEIN SEQUENCE OF 1-15</scope>
    <source>
        <strain>CC-124</strain>
    </source>
</reference>
<reference key="5">
    <citation type="journal article" date="2002" name="Plant Cell">
        <title>The Chlamydomonas reinhardtii plastid chromosome: islands of genes in a sea of repeats.</title>
        <authorList>
            <person name="Maul J.E."/>
            <person name="Lilly J.W."/>
            <person name="Cui L."/>
            <person name="dePamphilis C.W."/>
            <person name="Miller W."/>
            <person name="Harris E.H."/>
            <person name="Stern D.B."/>
        </authorList>
    </citation>
    <scope>IDENTIFICATION</scope>
    <scope>COMPLETE PLASTID GENOME</scope>
</reference>
<reference key="6">
    <citation type="journal article" date="1995" name="J. Biol. Chem.">
        <title>Purification and characterization of the cytochrome b6 f complex from Chlamydomonas reinhardtii.</title>
        <authorList>
            <person name="Pierre Y."/>
            <person name="Breyton C."/>
            <person name="Kramer D."/>
            <person name="Popot J.-L."/>
        </authorList>
    </citation>
    <scope>CHARACTERIZATION</scope>
    <source>
        <strain>WT12</strain>
    </source>
</reference>
<reference key="7">
    <citation type="journal article" date="2003" name="Nature">
        <title>An atypical haem in the cytochrome b(6)f complex.</title>
        <authorList>
            <person name="Stroebel D."/>
            <person name="Choquet Y."/>
            <person name="Popot J.-L."/>
            <person name="Picot D."/>
        </authorList>
    </citation>
    <scope>X-RAY CRYSTALLOGRAPHY (3.1 ANGSTROMS) OF 1-37</scope>
</reference>
<accession>Q08362</accession>
<accession>B7U1I5</accession>
<name>PETG_CHLRE</name>
<geneLocation type="chloroplast"/>
<organism>
    <name type="scientific">Chlamydomonas reinhardtii</name>
    <name type="common">Chlamydomonas smithii</name>
    <dbReference type="NCBI Taxonomy" id="3055"/>
    <lineage>
        <taxon>Eukaryota</taxon>
        <taxon>Viridiplantae</taxon>
        <taxon>Chlorophyta</taxon>
        <taxon>core chlorophytes</taxon>
        <taxon>Chlorophyceae</taxon>
        <taxon>CS clade</taxon>
        <taxon>Chlamydomonadales</taxon>
        <taxon>Chlamydomonadaceae</taxon>
        <taxon>Chlamydomonas</taxon>
    </lineage>
</organism>